<name>ISPE_PETMO</name>
<evidence type="ECO:0000255" key="1">
    <source>
        <dbReference type="HAMAP-Rule" id="MF_00061"/>
    </source>
</evidence>
<proteinExistence type="inferred from homology"/>
<accession>A9BFC2</accession>
<feature type="chain" id="PRO_0000335737" description="4-diphosphocytidyl-2-C-methyl-D-erythritol kinase">
    <location>
        <begin position="1"/>
        <end position="257"/>
    </location>
</feature>
<feature type="active site" evidence="1">
    <location>
        <position position="8"/>
    </location>
</feature>
<feature type="active site" evidence="1">
    <location>
        <position position="131"/>
    </location>
</feature>
<feature type="binding site" evidence="1">
    <location>
        <begin position="91"/>
        <end position="101"/>
    </location>
    <ligand>
        <name>ATP</name>
        <dbReference type="ChEBI" id="CHEBI:30616"/>
    </ligand>
</feature>
<gene>
    <name evidence="1" type="primary">ispE</name>
    <name type="ordered locus">Pmob_0160</name>
</gene>
<comment type="function">
    <text evidence="1">Catalyzes the phosphorylation of the position 2 hydroxy group of 4-diphosphocytidyl-2C-methyl-D-erythritol.</text>
</comment>
<comment type="catalytic activity">
    <reaction evidence="1">
        <text>4-CDP-2-C-methyl-D-erythritol + ATP = 4-CDP-2-C-methyl-D-erythritol 2-phosphate + ADP + H(+)</text>
        <dbReference type="Rhea" id="RHEA:18437"/>
        <dbReference type="ChEBI" id="CHEBI:15378"/>
        <dbReference type="ChEBI" id="CHEBI:30616"/>
        <dbReference type="ChEBI" id="CHEBI:57823"/>
        <dbReference type="ChEBI" id="CHEBI:57919"/>
        <dbReference type="ChEBI" id="CHEBI:456216"/>
        <dbReference type="EC" id="2.7.1.148"/>
    </reaction>
</comment>
<comment type="pathway">
    <text evidence="1">Isoprenoid biosynthesis; isopentenyl diphosphate biosynthesis via DXP pathway; isopentenyl diphosphate from 1-deoxy-D-xylulose 5-phosphate: step 3/6.</text>
</comment>
<comment type="similarity">
    <text evidence="1">Belongs to the GHMP kinase family. IspE subfamily.</text>
</comment>
<keyword id="KW-0067">ATP-binding</keyword>
<keyword id="KW-0414">Isoprene biosynthesis</keyword>
<keyword id="KW-0418">Kinase</keyword>
<keyword id="KW-0547">Nucleotide-binding</keyword>
<keyword id="KW-0808">Transferase</keyword>
<protein>
    <recommendedName>
        <fullName evidence="1">4-diphosphocytidyl-2-C-methyl-D-erythritol kinase</fullName>
        <shortName evidence="1">CMK</shortName>
        <ecNumber evidence="1">2.7.1.148</ecNumber>
    </recommendedName>
    <alternativeName>
        <fullName evidence="1">4-(cytidine-5'-diphospho)-2-C-methyl-D-erythritol kinase</fullName>
    </alternativeName>
</protein>
<organism>
    <name type="scientific">Petrotoga mobilis (strain DSM 10674 / SJ95)</name>
    <dbReference type="NCBI Taxonomy" id="403833"/>
    <lineage>
        <taxon>Bacteria</taxon>
        <taxon>Thermotogati</taxon>
        <taxon>Thermotogota</taxon>
        <taxon>Thermotogae</taxon>
        <taxon>Petrotogales</taxon>
        <taxon>Petrotogaceae</taxon>
        <taxon>Petrotoga</taxon>
    </lineage>
</organism>
<sequence>MHLKAFGKVNLYLDVISRRKDNYHNILTLFQSINEHDDIFIEFSESEIFESEPPLNISWDNNIIKKSIETFKKETGFDNFNLKIKLIKNLPMGGGLGGGSADAAAVLNFLSKNFKISEKDLFEISCKIGSDVPFLLKGGTAIGKGKGEILEFLEPLKLNIQIYPMNYNIDTKKMYEKLDQNWKSINHFGDPYNLYEALKNNDIITAKQNAFNVFEQVAFKEYPKLKQKKEDMEKDEGIIFALMSGSGSTLYKVIYAN</sequence>
<reference key="1">
    <citation type="submission" date="2007-11" db="EMBL/GenBank/DDBJ databases">
        <title>Complete sequence of Petroga mobilis SJ95.</title>
        <authorList>
            <consortium name="US DOE Joint Genome Institute"/>
            <person name="Copeland A."/>
            <person name="Lucas S."/>
            <person name="Lapidus A."/>
            <person name="Barry K."/>
            <person name="Glavina del Rio T."/>
            <person name="Dalin E."/>
            <person name="Tice H."/>
            <person name="Pitluck S."/>
            <person name="Meincke L."/>
            <person name="Brettin T."/>
            <person name="Bruce D."/>
            <person name="Detter J.C."/>
            <person name="Han C."/>
            <person name="Kuske C.R."/>
            <person name="Schmutz J."/>
            <person name="Larimer F."/>
            <person name="Land M."/>
            <person name="Hauser L."/>
            <person name="Kyrpides N."/>
            <person name="Mikhailova N."/>
            <person name="Noll K."/>
            <person name="Richardson P."/>
        </authorList>
    </citation>
    <scope>NUCLEOTIDE SEQUENCE [LARGE SCALE GENOMIC DNA]</scope>
    <source>
        <strain>DSM 10674 / SJ95</strain>
    </source>
</reference>
<dbReference type="EC" id="2.7.1.148" evidence="1"/>
<dbReference type="EMBL" id="CP000879">
    <property type="protein sequence ID" value="ABX30907.1"/>
    <property type="molecule type" value="Genomic_DNA"/>
</dbReference>
<dbReference type="RefSeq" id="WP_012208014.1">
    <property type="nucleotide sequence ID" value="NC_010003.1"/>
</dbReference>
<dbReference type="SMR" id="A9BFC2"/>
<dbReference type="STRING" id="403833.Pmob_0160"/>
<dbReference type="KEGG" id="pmo:Pmob_0160"/>
<dbReference type="eggNOG" id="COG1947">
    <property type="taxonomic scope" value="Bacteria"/>
</dbReference>
<dbReference type="HOGENOM" id="CLU_053057_2_0_0"/>
<dbReference type="OrthoDB" id="9809438at2"/>
<dbReference type="UniPathway" id="UPA00056">
    <property type="reaction ID" value="UER00094"/>
</dbReference>
<dbReference type="Proteomes" id="UP000000789">
    <property type="component" value="Chromosome"/>
</dbReference>
<dbReference type="GO" id="GO:0050515">
    <property type="term" value="F:4-(cytidine 5'-diphospho)-2-C-methyl-D-erythritol kinase activity"/>
    <property type="evidence" value="ECO:0007669"/>
    <property type="project" value="UniProtKB-UniRule"/>
</dbReference>
<dbReference type="GO" id="GO:0005524">
    <property type="term" value="F:ATP binding"/>
    <property type="evidence" value="ECO:0007669"/>
    <property type="project" value="UniProtKB-UniRule"/>
</dbReference>
<dbReference type="GO" id="GO:0019288">
    <property type="term" value="P:isopentenyl diphosphate biosynthetic process, methylerythritol 4-phosphate pathway"/>
    <property type="evidence" value="ECO:0007669"/>
    <property type="project" value="UniProtKB-UniRule"/>
</dbReference>
<dbReference type="GO" id="GO:0016114">
    <property type="term" value="P:terpenoid biosynthetic process"/>
    <property type="evidence" value="ECO:0007669"/>
    <property type="project" value="InterPro"/>
</dbReference>
<dbReference type="Gene3D" id="3.30.230.10">
    <property type="match status" value="1"/>
</dbReference>
<dbReference type="Gene3D" id="3.30.70.890">
    <property type="entry name" value="GHMP kinase, C-terminal domain"/>
    <property type="match status" value="1"/>
</dbReference>
<dbReference type="HAMAP" id="MF_00061">
    <property type="entry name" value="IspE"/>
    <property type="match status" value="1"/>
</dbReference>
<dbReference type="InterPro" id="IPR013750">
    <property type="entry name" value="GHMP_kinase_C_dom"/>
</dbReference>
<dbReference type="InterPro" id="IPR036554">
    <property type="entry name" value="GHMP_kinase_C_sf"/>
</dbReference>
<dbReference type="InterPro" id="IPR006204">
    <property type="entry name" value="GHMP_kinase_N_dom"/>
</dbReference>
<dbReference type="InterPro" id="IPR004424">
    <property type="entry name" value="IspE"/>
</dbReference>
<dbReference type="InterPro" id="IPR020568">
    <property type="entry name" value="Ribosomal_Su5_D2-typ_SF"/>
</dbReference>
<dbReference type="InterPro" id="IPR014721">
    <property type="entry name" value="Ribsml_uS5_D2-typ_fold_subgr"/>
</dbReference>
<dbReference type="NCBIfam" id="TIGR00154">
    <property type="entry name" value="ispE"/>
    <property type="match status" value="1"/>
</dbReference>
<dbReference type="PANTHER" id="PTHR43527">
    <property type="entry name" value="4-DIPHOSPHOCYTIDYL-2-C-METHYL-D-ERYTHRITOL KINASE, CHLOROPLASTIC"/>
    <property type="match status" value="1"/>
</dbReference>
<dbReference type="PANTHER" id="PTHR43527:SF2">
    <property type="entry name" value="4-DIPHOSPHOCYTIDYL-2-C-METHYL-D-ERYTHRITOL KINASE, CHLOROPLASTIC"/>
    <property type="match status" value="1"/>
</dbReference>
<dbReference type="Pfam" id="PF08544">
    <property type="entry name" value="GHMP_kinases_C"/>
    <property type="match status" value="1"/>
</dbReference>
<dbReference type="Pfam" id="PF00288">
    <property type="entry name" value="GHMP_kinases_N"/>
    <property type="match status" value="1"/>
</dbReference>
<dbReference type="PIRSF" id="PIRSF010376">
    <property type="entry name" value="IspE"/>
    <property type="match status" value="1"/>
</dbReference>
<dbReference type="SUPFAM" id="SSF55060">
    <property type="entry name" value="GHMP Kinase, C-terminal domain"/>
    <property type="match status" value="1"/>
</dbReference>
<dbReference type="SUPFAM" id="SSF54211">
    <property type="entry name" value="Ribosomal protein S5 domain 2-like"/>
    <property type="match status" value="1"/>
</dbReference>